<sequence>METSQEPLVTQKKSKPSVWRSMSLFLVPLLLSNVLQSVGQLVGMMAVGRWLGVDAVAAVSSFFPLFFLLISFTIGIGSGSSILIGQAYGAKNEERLKAVVGTTLTFTFLLGVVLAVIGSIFTLDILRLMGTPENVIHVSANYARILFYAMPFMFLYFAYTTFLRGTGDSKTPFYTLIVSTVINIALLPVLILGMFGFPKLGIYGSAYATVISTIATFLVLMVYLRKRKHPLQFDKTVRRYLKMDKELLVLLLRLGVPASINMILVSLSEIAVISFVNHYGSNATAAYGVVNQVASYVQMPAVSLGIAVSIFAAQSIGANEFDRLKQVIRVGIWLNYIIGGVLIILIYVFSHQILSLFLTEQETLYIAHRLLMITLWSYLLFGNAQIISATMRASGTVLWPTVISIFAIWGVEVPVAFVLSHYTKLEILGVWVGYPAAFAVSLLLIYGYYQFVWKKKQITRLIQ</sequence>
<dbReference type="EMBL" id="AL009126">
    <property type="protein sequence ID" value="CAB13720.2"/>
    <property type="molecule type" value="Genomic_DNA"/>
</dbReference>
<dbReference type="PIR" id="A69905">
    <property type="entry name" value="A69905"/>
</dbReference>
<dbReference type="RefSeq" id="NP_389719.2">
    <property type="nucleotide sequence ID" value="NC_000964.3"/>
</dbReference>
<dbReference type="RefSeq" id="WP_004399508.1">
    <property type="nucleotide sequence ID" value="NZ_OZ025638.1"/>
</dbReference>
<dbReference type="SMR" id="O34474"/>
<dbReference type="FunCoup" id="O34474">
    <property type="interactions" value="127"/>
</dbReference>
<dbReference type="STRING" id="224308.BSU18370"/>
<dbReference type="TCDB" id="2.A.66.1.25">
    <property type="family name" value="the multidrug/oligosaccharidyl-lipid/polysaccharide (mop) flippase superfamily"/>
</dbReference>
<dbReference type="PaxDb" id="224308-BSU18370"/>
<dbReference type="EnsemblBacteria" id="CAB13720">
    <property type="protein sequence ID" value="CAB13720"/>
    <property type="gene ID" value="BSU_18370"/>
</dbReference>
<dbReference type="GeneID" id="939596"/>
<dbReference type="KEGG" id="bsu:BSU18370"/>
<dbReference type="PATRIC" id="fig|224308.179.peg.2004"/>
<dbReference type="eggNOG" id="COG0534">
    <property type="taxonomic scope" value="Bacteria"/>
</dbReference>
<dbReference type="InParanoid" id="O34474"/>
<dbReference type="OrthoDB" id="9776324at2"/>
<dbReference type="PhylomeDB" id="O34474"/>
<dbReference type="BioCyc" id="BSUB:BSU18370-MONOMER"/>
<dbReference type="Proteomes" id="UP000001570">
    <property type="component" value="Chromosome"/>
</dbReference>
<dbReference type="GO" id="GO:0005886">
    <property type="term" value="C:plasma membrane"/>
    <property type="evidence" value="ECO:0007669"/>
    <property type="project" value="UniProtKB-SubCell"/>
</dbReference>
<dbReference type="GO" id="GO:0015297">
    <property type="term" value="F:antiporter activity"/>
    <property type="evidence" value="ECO:0007669"/>
    <property type="project" value="UniProtKB-KW"/>
</dbReference>
<dbReference type="GO" id="GO:0042910">
    <property type="term" value="F:xenobiotic transmembrane transporter activity"/>
    <property type="evidence" value="ECO:0007669"/>
    <property type="project" value="InterPro"/>
</dbReference>
<dbReference type="GO" id="GO:0006811">
    <property type="term" value="P:monoatomic ion transport"/>
    <property type="evidence" value="ECO:0007669"/>
    <property type="project" value="UniProtKB-KW"/>
</dbReference>
<dbReference type="CDD" id="cd13138">
    <property type="entry name" value="MATE_yoeA_like"/>
    <property type="match status" value="1"/>
</dbReference>
<dbReference type="InterPro" id="IPR002528">
    <property type="entry name" value="MATE_fam"/>
</dbReference>
<dbReference type="InterPro" id="IPR048279">
    <property type="entry name" value="MdtK-like"/>
</dbReference>
<dbReference type="InterPro" id="IPR052031">
    <property type="entry name" value="Membrane_Transporter-Flippase"/>
</dbReference>
<dbReference type="NCBIfam" id="TIGR00797">
    <property type="entry name" value="matE"/>
    <property type="match status" value="1"/>
</dbReference>
<dbReference type="PANTHER" id="PTHR43549">
    <property type="entry name" value="MULTIDRUG RESISTANCE PROTEIN YPNP-RELATED"/>
    <property type="match status" value="1"/>
</dbReference>
<dbReference type="PANTHER" id="PTHR43549:SF3">
    <property type="entry name" value="MULTIDRUG RESISTANCE PROTEIN YPNP-RELATED"/>
    <property type="match status" value="1"/>
</dbReference>
<dbReference type="Pfam" id="PF01554">
    <property type="entry name" value="MatE"/>
    <property type="match status" value="2"/>
</dbReference>
<dbReference type="PIRSF" id="PIRSF006603">
    <property type="entry name" value="DinF"/>
    <property type="match status" value="1"/>
</dbReference>
<gene>
    <name type="primary">yoeA</name>
    <name type="ordered locus">BSU18370</name>
</gene>
<name>YOEA_BACSU</name>
<feature type="chain" id="PRO_0000360857" description="Probable multidrug resistance protein YoeA">
    <location>
        <begin position="1"/>
        <end position="463"/>
    </location>
</feature>
<feature type="transmembrane region" description="Helical" evidence="1">
    <location>
        <begin position="24"/>
        <end position="44"/>
    </location>
</feature>
<feature type="transmembrane region" description="Helical" evidence="1">
    <location>
        <begin position="56"/>
        <end position="76"/>
    </location>
</feature>
<feature type="transmembrane region" description="Helical" evidence="1">
    <location>
        <begin position="106"/>
        <end position="126"/>
    </location>
</feature>
<feature type="transmembrane region" description="Helical" evidence="1">
    <location>
        <begin position="143"/>
        <end position="163"/>
    </location>
</feature>
<feature type="transmembrane region" description="Helical" evidence="1">
    <location>
        <begin position="177"/>
        <end position="197"/>
    </location>
</feature>
<feature type="transmembrane region" description="Helical" evidence="1">
    <location>
        <begin position="202"/>
        <end position="222"/>
    </location>
</feature>
<feature type="transmembrane region" description="Helical" evidence="1">
    <location>
        <begin position="256"/>
        <end position="276"/>
    </location>
</feature>
<feature type="transmembrane region" description="Helical" evidence="1">
    <location>
        <begin position="293"/>
        <end position="313"/>
    </location>
</feature>
<feature type="transmembrane region" description="Helical" evidence="1">
    <location>
        <begin position="330"/>
        <end position="350"/>
    </location>
</feature>
<feature type="transmembrane region" description="Helical" evidence="1">
    <location>
        <begin position="370"/>
        <end position="390"/>
    </location>
</feature>
<feature type="transmembrane region" description="Helical" evidence="1">
    <location>
        <begin position="397"/>
        <end position="417"/>
    </location>
</feature>
<feature type="transmembrane region" description="Helical" evidence="1">
    <location>
        <begin position="427"/>
        <end position="447"/>
    </location>
</feature>
<protein>
    <recommendedName>
        <fullName>Probable multidrug resistance protein YoeA</fullName>
    </recommendedName>
</protein>
<evidence type="ECO:0000255" key="1"/>
<evidence type="ECO:0000305" key="2"/>
<comment type="subcellular location">
    <subcellularLocation>
        <location evidence="2">Cell membrane</location>
        <topology evidence="2">Multi-pass membrane protein</topology>
    </subcellularLocation>
</comment>
<comment type="similarity">
    <text evidence="2">Belongs to the multi antimicrobial extrusion (MATE) (TC 2.A.66.1) family.</text>
</comment>
<keyword id="KW-0050">Antiport</keyword>
<keyword id="KW-1003">Cell membrane</keyword>
<keyword id="KW-0406">Ion transport</keyword>
<keyword id="KW-0472">Membrane</keyword>
<keyword id="KW-1185">Reference proteome</keyword>
<keyword id="KW-0812">Transmembrane</keyword>
<keyword id="KW-1133">Transmembrane helix</keyword>
<keyword id="KW-0813">Transport</keyword>
<organism>
    <name type="scientific">Bacillus subtilis (strain 168)</name>
    <dbReference type="NCBI Taxonomy" id="224308"/>
    <lineage>
        <taxon>Bacteria</taxon>
        <taxon>Bacillati</taxon>
        <taxon>Bacillota</taxon>
        <taxon>Bacilli</taxon>
        <taxon>Bacillales</taxon>
        <taxon>Bacillaceae</taxon>
        <taxon>Bacillus</taxon>
    </lineage>
</organism>
<accession>O34474</accession>
<proteinExistence type="inferred from homology"/>
<reference key="1">
    <citation type="journal article" date="1997" name="Nature">
        <title>The complete genome sequence of the Gram-positive bacterium Bacillus subtilis.</title>
        <authorList>
            <person name="Kunst F."/>
            <person name="Ogasawara N."/>
            <person name="Moszer I."/>
            <person name="Albertini A.M."/>
            <person name="Alloni G."/>
            <person name="Azevedo V."/>
            <person name="Bertero M.G."/>
            <person name="Bessieres P."/>
            <person name="Bolotin A."/>
            <person name="Borchert S."/>
            <person name="Borriss R."/>
            <person name="Boursier L."/>
            <person name="Brans A."/>
            <person name="Braun M."/>
            <person name="Brignell S.C."/>
            <person name="Bron S."/>
            <person name="Brouillet S."/>
            <person name="Bruschi C.V."/>
            <person name="Caldwell B."/>
            <person name="Capuano V."/>
            <person name="Carter N.M."/>
            <person name="Choi S.-K."/>
            <person name="Codani J.-J."/>
            <person name="Connerton I.F."/>
            <person name="Cummings N.J."/>
            <person name="Daniel R.A."/>
            <person name="Denizot F."/>
            <person name="Devine K.M."/>
            <person name="Duesterhoeft A."/>
            <person name="Ehrlich S.D."/>
            <person name="Emmerson P.T."/>
            <person name="Entian K.-D."/>
            <person name="Errington J."/>
            <person name="Fabret C."/>
            <person name="Ferrari E."/>
            <person name="Foulger D."/>
            <person name="Fritz C."/>
            <person name="Fujita M."/>
            <person name="Fujita Y."/>
            <person name="Fuma S."/>
            <person name="Galizzi A."/>
            <person name="Galleron N."/>
            <person name="Ghim S.-Y."/>
            <person name="Glaser P."/>
            <person name="Goffeau A."/>
            <person name="Golightly E.J."/>
            <person name="Grandi G."/>
            <person name="Guiseppi G."/>
            <person name="Guy B.J."/>
            <person name="Haga K."/>
            <person name="Haiech J."/>
            <person name="Harwood C.R."/>
            <person name="Henaut A."/>
            <person name="Hilbert H."/>
            <person name="Holsappel S."/>
            <person name="Hosono S."/>
            <person name="Hullo M.-F."/>
            <person name="Itaya M."/>
            <person name="Jones L.-M."/>
            <person name="Joris B."/>
            <person name="Karamata D."/>
            <person name="Kasahara Y."/>
            <person name="Klaerr-Blanchard M."/>
            <person name="Klein C."/>
            <person name="Kobayashi Y."/>
            <person name="Koetter P."/>
            <person name="Koningstein G."/>
            <person name="Krogh S."/>
            <person name="Kumano M."/>
            <person name="Kurita K."/>
            <person name="Lapidus A."/>
            <person name="Lardinois S."/>
            <person name="Lauber J."/>
            <person name="Lazarevic V."/>
            <person name="Lee S.-M."/>
            <person name="Levine A."/>
            <person name="Liu H."/>
            <person name="Masuda S."/>
            <person name="Mauel C."/>
            <person name="Medigue C."/>
            <person name="Medina N."/>
            <person name="Mellado R.P."/>
            <person name="Mizuno M."/>
            <person name="Moestl D."/>
            <person name="Nakai S."/>
            <person name="Noback M."/>
            <person name="Noone D."/>
            <person name="O'Reilly M."/>
            <person name="Ogawa K."/>
            <person name="Ogiwara A."/>
            <person name="Oudega B."/>
            <person name="Park S.-H."/>
            <person name="Parro V."/>
            <person name="Pohl T.M."/>
            <person name="Portetelle D."/>
            <person name="Porwollik S."/>
            <person name="Prescott A.M."/>
            <person name="Presecan E."/>
            <person name="Pujic P."/>
            <person name="Purnelle B."/>
            <person name="Rapoport G."/>
            <person name="Rey M."/>
            <person name="Reynolds S."/>
            <person name="Rieger M."/>
            <person name="Rivolta C."/>
            <person name="Rocha E."/>
            <person name="Roche B."/>
            <person name="Rose M."/>
            <person name="Sadaie Y."/>
            <person name="Sato T."/>
            <person name="Scanlan E."/>
            <person name="Schleich S."/>
            <person name="Schroeter R."/>
            <person name="Scoffone F."/>
            <person name="Sekiguchi J."/>
            <person name="Sekowska A."/>
            <person name="Seror S.J."/>
            <person name="Serror P."/>
            <person name="Shin B.-S."/>
            <person name="Soldo B."/>
            <person name="Sorokin A."/>
            <person name="Tacconi E."/>
            <person name="Takagi T."/>
            <person name="Takahashi H."/>
            <person name="Takemaru K."/>
            <person name="Takeuchi M."/>
            <person name="Tamakoshi A."/>
            <person name="Tanaka T."/>
            <person name="Terpstra P."/>
            <person name="Tognoni A."/>
            <person name="Tosato V."/>
            <person name="Uchiyama S."/>
            <person name="Vandenbol M."/>
            <person name="Vannier F."/>
            <person name="Vassarotti A."/>
            <person name="Viari A."/>
            <person name="Wambutt R."/>
            <person name="Wedler E."/>
            <person name="Wedler H."/>
            <person name="Weitzenegger T."/>
            <person name="Winters P."/>
            <person name="Wipat A."/>
            <person name="Yamamoto H."/>
            <person name="Yamane K."/>
            <person name="Yasumoto K."/>
            <person name="Yata K."/>
            <person name="Yoshida K."/>
            <person name="Yoshikawa H.-F."/>
            <person name="Zumstein E."/>
            <person name="Yoshikawa H."/>
            <person name="Danchin A."/>
        </authorList>
    </citation>
    <scope>NUCLEOTIDE SEQUENCE [LARGE SCALE GENOMIC DNA]</scope>
    <source>
        <strain>168</strain>
    </source>
</reference>
<reference key="2">
    <citation type="journal article" date="2009" name="Microbiology">
        <title>From a consortium sequence to a unified sequence: the Bacillus subtilis 168 reference genome a decade later.</title>
        <authorList>
            <person name="Barbe V."/>
            <person name="Cruveiller S."/>
            <person name="Kunst F."/>
            <person name="Lenoble P."/>
            <person name="Meurice G."/>
            <person name="Sekowska A."/>
            <person name="Vallenet D."/>
            <person name="Wang T."/>
            <person name="Moszer I."/>
            <person name="Medigue C."/>
            <person name="Danchin A."/>
        </authorList>
    </citation>
    <scope>SEQUENCE REVISION TO 363 AND 373</scope>
</reference>